<name>CYCX_NITEU</name>
<keyword id="KW-0249">Electron transport</keyword>
<keyword id="KW-0349">Heme</keyword>
<keyword id="KW-0408">Iron</keyword>
<keyword id="KW-0479">Metal-binding</keyword>
<keyword id="KW-0574">Periplasm</keyword>
<keyword id="KW-1185">Reference proteome</keyword>
<keyword id="KW-0732">Signal</keyword>
<keyword id="KW-0813">Transport</keyword>
<dbReference type="EMBL" id="U08288">
    <property type="protein sequence ID" value="AAA19968.1"/>
    <property type="molecule type" value="Unassigned_DNA"/>
</dbReference>
<dbReference type="EMBL" id="AL954747">
    <property type="protein sequence ID" value="CAD84870.1"/>
    <property type="molecule type" value="Genomic_DNA"/>
</dbReference>
<dbReference type="EMBL" id="AL954747">
    <property type="protein sequence ID" value="CAD86248.1"/>
    <property type="molecule type" value="Genomic_DNA"/>
</dbReference>
<dbReference type="PIR" id="B59037">
    <property type="entry name" value="B59037"/>
</dbReference>
<dbReference type="RefSeq" id="WP_011111568.1">
    <property type="nucleotide sequence ID" value="NC_004757.1"/>
</dbReference>
<dbReference type="STRING" id="228410.NE0959"/>
<dbReference type="GeneID" id="87105467"/>
<dbReference type="KEGG" id="neu:NE0959"/>
<dbReference type="KEGG" id="neu:NE2336"/>
<dbReference type="eggNOG" id="COG3005">
    <property type="taxonomic scope" value="Bacteria"/>
</dbReference>
<dbReference type="HOGENOM" id="CLU_096753_2_0_4"/>
<dbReference type="OrthoDB" id="9782159at2"/>
<dbReference type="PhylomeDB" id="Q50926"/>
<dbReference type="BioCyc" id="MetaCyc:MONOMER-17538"/>
<dbReference type="Proteomes" id="UP000001416">
    <property type="component" value="Chromosome"/>
</dbReference>
<dbReference type="GO" id="GO:0042597">
    <property type="term" value="C:periplasmic space"/>
    <property type="evidence" value="ECO:0007669"/>
    <property type="project" value="UniProtKB-SubCell"/>
</dbReference>
<dbReference type="GO" id="GO:0009055">
    <property type="term" value="F:electron transfer activity"/>
    <property type="evidence" value="ECO:0007669"/>
    <property type="project" value="TreeGrafter"/>
</dbReference>
<dbReference type="GO" id="GO:0046872">
    <property type="term" value="F:metal ion binding"/>
    <property type="evidence" value="ECO:0007669"/>
    <property type="project" value="UniProtKB-KW"/>
</dbReference>
<dbReference type="GO" id="GO:0009061">
    <property type="term" value="P:anaerobic respiration"/>
    <property type="evidence" value="ECO:0007669"/>
    <property type="project" value="TreeGrafter"/>
</dbReference>
<dbReference type="Gene3D" id="1.10.3820.10">
    <property type="entry name" value="Di-heme elbow motif domain"/>
    <property type="match status" value="1"/>
</dbReference>
<dbReference type="InterPro" id="IPR051174">
    <property type="entry name" value="Cytochrome_c-type_ET"/>
</dbReference>
<dbReference type="InterPro" id="IPR036280">
    <property type="entry name" value="Multihaem_cyt_sf"/>
</dbReference>
<dbReference type="InterPro" id="IPR005126">
    <property type="entry name" value="NapC/NirT_cyt_c_N"/>
</dbReference>
<dbReference type="InterPro" id="IPR038266">
    <property type="entry name" value="NapC/NirT_cytc_sf"/>
</dbReference>
<dbReference type="PANTHER" id="PTHR30333">
    <property type="entry name" value="CYTOCHROME C-TYPE PROTEIN"/>
    <property type="match status" value="1"/>
</dbReference>
<dbReference type="PANTHER" id="PTHR30333:SF3">
    <property type="entry name" value="CYTOCHROME C-TYPE PROTEIN TORY"/>
    <property type="match status" value="1"/>
</dbReference>
<dbReference type="Pfam" id="PF03264">
    <property type="entry name" value="Cytochrom_NNT"/>
    <property type="match status" value="1"/>
</dbReference>
<dbReference type="SUPFAM" id="SSF48695">
    <property type="entry name" value="Multiheme cytochromes"/>
    <property type="match status" value="1"/>
</dbReference>
<dbReference type="PROSITE" id="PS51008">
    <property type="entry name" value="MULTIHEME_CYTC"/>
    <property type="match status" value="1"/>
</dbReference>
<evidence type="ECO:0000250" key="1">
    <source>
        <dbReference type="UniProtKB" id="Q72EF4"/>
    </source>
</evidence>
<evidence type="ECO:0000255" key="2"/>
<evidence type="ECO:0000256" key="3">
    <source>
        <dbReference type="SAM" id="MobiDB-lite"/>
    </source>
</evidence>
<evidence type="ECO:0000305" key="4"/>
<protein>
    <recommendedName>
        <fullName>Probable tetraheme cytochrome c-type</fullName>
    </recommendedName>
</protein>
<comment type="subcellular location">
    <subcellularLocation>
        <location evidence="4">Periplasm</location>
    </subcellularLocation>
</comment>
<comment type="PTM">
    <text evidence="4">Binds 4 heme groups per subunit.</text>
</comment>
<comment type="similarity">
    <text evidence="4">Belongs to the NapC/NirT/NrfH family.</text>
</comment>
<feature type="signal peptide" evidence="2">
    <location>
        <begin position="1"/>
        <end position="28"/>
    </location>
</feature>
<feature type="chain" id="PRO_0000006592" description="Probable tetraheme cytochrome c-type">
    <location>
        <begin position="29"/>
        <end position="233"/>
    </location>
</feature>
<feature type="region of interest" description="Disordered" evidence="3">
    <location>
        <begin position="182"/>
        <end position="233"/>
    </location>
</feature>
<feature type="compositionally biased region" description="Acidic residues" evidence="3">
    <location>
        <begin position="191"/>
        <end position="214"/>
    </location>
</feature>
<feature type="compositionally biased region" description="Acidic residues" evidence="3">
    <location>
        <begin position="224"/>
        <end position="233"/>
    </location>
</feature>
<feature type="binding site" description="covalent" evidence="1">
    <location>
        <position position="39"/>
    </location>
    <ligand>
        <name>heme</name>
        <dbReference type="ChEBI" id="CHEBI:30413"/>
        <label>1</label>
    </ligand>
</feature>
<feature type="binding site" description="covalent" evidence="1">
    <location>
        <position position="42"/>
    </location>
    <ligand>
        <name>heme</name>
        <dbReference type="ChEBI" id="CHEBI:30413"/>
        <label>1</label>
    </ligand>
</feature>
<feature type="binding site" description="axial binding residue" evidence="1">
    <location>
        <position position="45"/>
    </location>
    <ligand>
        <name>heme</name>
        <dbReference type="ChEBI" id="CHEBI:30413"/>
        <label>1</label>
    </ligand>
    <ligandPart>
        <name>Fe</name>
        <dbReference type="ChEBI" id="CHEBI:18248"/>
    </ligandPart>
</feature>
<feature type="binding site" description="covalent" evidence="1">
    <location>
        <position position="67"/>
    </location>
    <ligand>
        <name>heme</name>
        <dbReference type="ChEBI" id="CHEBI:30413"/>
        <label>2</label>
    </ligand>
</feature>
<feature type="binding site" description="covalent" evidence="1">
    <location>
        <position position="70"/>
    </location>
    <ligand>
        <name>heme</name>
        <dbReference type="ChEBI" id="CHEBI:30413"/>
        <label>2</label>
    </ligand>
</feature>
<feature type="binding site" description="axial binding residue" evidence="1">
    <location>
        <position position="71"/>
    </location>
    <ligand>
        <name>heme</name>
        <dbReference type="ChEBI" id="CHEBI:30413"/>
        <label>2</label>
    </ligand>
    <ligandPart>
        <name>Fe</name>
        <dbReference type="ChEBI" id="CHEBI:18248"/>
    </ligandPart>
</feature>
<feature type="binding site" description="axial binding residue" evidence="1">
    <location>
        <position position="93"/>
    </location>
    <ligand>
        <name>heme</name>
        <dbReference type="ChEBI" id="CHEBI:30413"/>
        <label>1</label>
    </ligand>
    <ligandPart>
        <name>Fe</name>
        <dbReference type="ChEBI" id="CHEBI:18248"/>
    </ligandPart>
</feature>
<feature type="binding site" description="covalent" evidence="1">
    <location>
        <position position="131"/>
    </location>
    <ligand>
        <name>heme</name>
        <dbReference type="ChEBI" id="CHEBI:30413"/>
        <label>3</label>
    </ligand>
</feature>
<feature type="binding site" description="covalent" evidence="1">
    <location>
        <position position="134"/>
    </location>
    <ligand>
        <name>heme</name>
        <dbReference type="ChEBI" id="CHEBI:30413"/>
        <label>3</label>
    </ligand>
</feature>
<feature type="binding site" description="axial binding residue" evidence="1">
    <location>
        <position position="135"/>
    </location>
    <ligand>
        <name>heme</name>
        <dbReference type="ChEBI" id="CHEBI:30413"/>
        <label>3</label>
    </ligand>
    <ligandPart>
        <name>Fe</name>
        <dbReference type="ChEBI" id="CHEBI:18248"/>
    </ligandPart>
</feature>
<feature type="binding site" description="covalent" evidence="1">
    <location>
        <position position="159"/>
    </location>
    <ligand>
        <name>heme</name>
        <dbReference type="ChEBI" id="CHEBI:30413"/>
        <label>4</label>
    </ligand>
</feature>
<feature type="binding site" description="covalent" evidence="1">
    <location>
        <position position="162"/>
    </location>
    <ligand>
        <name>heme</name>
        <dbReference type="ChEBI" id="CHEBI:30413"/>
        <label>4</label>
    </ligand>
</feature>
<feature type="binding site" description="axial binding residue" evidence="1">
    <location>
        <position position="163"/>
    </location>
    <ligand>
        <name>heme</name>
        <dbReference type="ChEBI" id="CHEBI:30413"/>
        <label>4</label>
    </ligand>
    <ligandPart>
        <name>Fe</name>
        <dbReference type="ChEBI" id="CHEBI:18248"/>
    </ligandPart>
</feature>
<feature type="binding site" description="axial binding residue" evidence="1">
    <location>
        <position position="168"/>
    </location>
    <ligand>
        <name>heme</name>
        <dbReference type="ChEBI" id="CHEBI:30413"/>
        <label>2</label>
    </ligand>
    <ligandPart>
        <name>Fe</name>
        <dbReference type="ChEBI" id="CHEBI:18248"/>
    </ligandPart>
</feature>
<feature type="site" description="Interaction with NrfA" evidence="1">
    <location>
        <position position="165"/>
    </location>
</feature>
<reference key="1">
    <citation type="journal article" date="1994" name="J. Bacteriol.">
        <title>Organization of the hao gene cluster of Nitrosomonas europaea: genes for two tetraheme c cytochromes.</title>
        <authorList>
            <person name="Bergmann D.J."/>
            <person name="Arciero D.M."/>
            <person name="Hooper A.B."/>
        </authorList>
    </citation>
    <scope>NUCLEOTIDE SEQUENCE [GENOMIC DNA]</scope>
    <source>
        <strain>ATCC 19718 / CIP 103999 / KCTC 2705 / NBRC 14298</strain>
    </source>
</reference>
<reference key="2">
    <citation type="journal article" date="2003" name="J. Bacteriol.">
        <title>Complete genome sequence of the ammonia-oxidizing bacterium and obligate chemolithoautotroph Nitrosomonas europaea.</title>
        <authorList>
            <person name="Chain P."/>
            <person name="Lamerdin J.E."/>
            <person name="Larimer F.W."/>
            <person name="Regala W."/>
            <person name="Lao V."/>
            <person name="Land M.L."/>
            <person name="Hauser L."/>
            <person name="Hooper A.B."/>
            <person name="Klotz M.G."/>
            <person name="Norton J."/>
            <person name="Sayavedra-Soto L.A."/>
            <person name="Arciero D.M."/>
            <person name="Hommes N.G."/>
            <person name="Whittaker M.M."/>
            <person name="Arp D.J."/>
        </authorList>
    </citation>
    <scope>NUCLEOTIDE SEQUENCE [LARGE SCALE GENOMIC DNA]</scope>
    <source>
        <strain>ATCC 19718 / CIP 103999 / KCTC 2705 / NBRC 14298</strain>
    </source>
</reference>
<proteinExistence type="inferred from homology"/>
<organism>
    <name type="scientific">Nitrosomonas europaea (strain ATCC 19718 / CIP 103999 / KCTC 2705 / NBRC 14298)</name>
    <dbReference type="NCBI Taxonomy" id="228410"/>
    <lineage>
        <taxon>Bacteria</taxon>
        <taxon>Pseudomonadati</taxon>
        <taxon>Pseudomonadota</taxon>
        <taxon>Betaproteobacteria</taxon>
        <taxon>Nitrosomonadales</taxon>
        <taxon>Nitrosomonadaceae</taxon>
        <taxon>Nitrosomonas</taxon>
    </lineage>
</organism>
<gene>
    <name type="primary">cycX1</name>
    <name type="ordered locus">NE2336</name>
</gene>
<gene>
    <name type="primary">cycX2</name>
    <name type="ordered locus">NE0959</name>
</gene>
<accession>Q50926</accession>
<sequence>MTRLQKGSIGTLLTGALLGIVLVAVVFGGEAALSTEEFCTSCHSMTYPQAELKQSTHYGALGVNPGCKDCHIPQGIENFHLAVATHAIDGARELYLELVNDYSTLEKFNERRLEMAHDARMNLKKWDSITCRTCHKKPAPPGESAQAEHKKMETEGATCIDCHQNLVHEEVPMTDLNASIAQGKLVLKPEDDGDDEEADEDEDEETEEADDSSDSESASSSDNSDNEDDNNDE</sequence>